<keyword id="KW-0963">Cytoplasm</keyword>
<keyword id="KW-0312">Gluconeogenesis</keyword>
<keyword id="KW-0324">Glycolysis</keyword>
<keyword id="KW-0413">Isomerase</keyword>
<keyword id="KW-1185">Reference proteome</keyword>
<dbReference type="EC" id="5.3.1.1" evidence="1"/>
<dbReference type="EMBL" id="BA000040">
    <property type="protein sequence ID" value="BAC50072.1"/>
    <property type="molecule type" value="Genomic_DNA"/>
</dbReference>
<dbReference type="RefSeq" id="NP_771447.1">
    <property type="nucleotide sequence ID" value="NC_004463.1"/>
</dbReference>
<dbReference type="RefSeq" id="WP_011087575.1">
    <property type="nucleotide sequence ID" value="NC_004463.1"/>
</dbReference>
<dbReference type="SMR" id="Q89KU3"/>
<dbReference type="FunCoup" id="Q89KU3">
    <property type="interactions" value="692"/>
</dbReference>
<dbReference type="STRING" id="224911.AAV28_21330"/>
<dbReference type="EnsemblBacteria" id="BAC50072">
    <property type="protein sequence ID" value="BAC50072"/>
    <property type="gene ID" value="BAC50072"/>
</dbReference>
<dbReference type="GeneID" id="46491812"/>
<dbReference type="KEGG" id="bja:bll4807"/>
<dbReference type="PATRIC" id="fig|224911.44.peg.4646"/>
<dbReference type="eggNOG" id="COG0149">
    <property type="taxonomic scope" value="Bacteria"/>
</dbReference>
<dbReference type="HOGENOM" id="CLU_024251_2_1_5"/>
<dbReference type="InParanoid" id="Q89KU3"/>
<dbReference type="OrthoDB" id="9809429at2"/>
<dbReference type="PhylomeDB" id="Q89KU3"/>
<dbReference type="UniPathway" id="UPA00109">
    <property type="reaction ID" value="UER00189"/>
</dbReference>
<dbReference type="UniPathway" id="UPA00138"/>
<dbReference type="Proteomes" id="UP000002526">
    <property type="component" value="Chromosome"/>
</dbReference>
<dbReference type="GO" id="GO:0005829">
    <property type="term" value="C:cytosol"/>
    <property type="evidence" value="ECO:0000318"/>
    <property type="project" value="GO_Central"/>
</dbReference>
<dbReference type="GO" id="GO:0004807">
    <property type="term" value="F:triose-phosphate isomerase activity"/>
    <property type="evidence" value="ECO:0000318"/>
    <property type="project" value="GO_Central"/>
</dbReference>
<dbReference type="GO" id="GO:0006094">
    <property type="term" value="P:gluconeogenesis"/>
    <property type="evidence" value="ECO:0000318"/>
    <property type="project" value="GO_Central"/>
</dbReference>
<dbReference type="GO" id="GO:0046166">
    <property type="term" value="P:glyceraldehyde-3-phosphate biosynthetic process"/>
    <property type="evidence" value="ECO:0000318"/>
    <property type="project" value="GO_Central"/>
</dbReference>
<dbReference type="GO" id="GO:0019563">
    <property type="term" value="P:glycerol catabolic process"/>
    <property type="evidence" value="ECO:0000318"/>
    <property type="project" value="GO_Central"/>
</dbReference>
<dbReference type="GO" id="GO:0006096">
    <property type="term" value="P:glycolytic process"/>
    <property type="evidence" value="ECO:0000318"/>
    <property type="project" value="GO_Central"/>
</dbReference>
<dbReference type="CDD" id="cd00311">
    <property type="entry name" value="TIM"/>
    <property type="match status" value="1"/>
</dbReference>
<dbReference type="FunFam" id="3.20.20.70:FF:000016">
    <property type="entry name" value="Triosephosphate isomerase"/>
    <property type="match status" value="1"/>
</dbReference>
<dbReference type="Gene3D" id="3.20.20.70">
    <property type="entry name" value="Aldolase class I"/>
    <property type="match status" value="1"/>
</dbReference>
<dbReference type="HAMAP" id="MF_00147_B">
    <property type="entry name" value="TIM_B"/>
    <property type="match status" value="1"/>
</dbReference>
<dbReference type="InterPro" id="IPR013785">
    <property type="entry name" value="Aldolase_TIM"/>
</dbReference>
<dbReference type="InterPro" id="IPR035990">
    <property type="entry name" value="TIM_sf"/>
</dbReference>
<dbReference type="InterPro" id="IPR022896">
    <property type="entry name" value="TrioseP_Isoase_bac/euk"/>
</dbReference>
<dbReference type="InterPro" id="IPR000652">
    <property type="entry name" value="Triosephosphate_isomerase"/>
</dbReference>
<dbReference type="InterPro" id="IPR020861">
    <property type="entry name" value="Triosephosphate_isomerase_AS"/>
</dbReference>
<dbReference type="NCBIfam" id="TIGR00419">
    <property type="entry name" value="tim"/>
    <property type="match status" value="1"/>
</dbReference>
<dbReference type="PANTHER" id="PTHR21139">
    <property type="entry name" value="TRIOSEPHOSPHATE ISOMERASE"/>
    <property type="match status" value="1"/>
</dbReference>
<dbReference type="PANTHER" id="PTHR21139:SF42">
    <property type="entry name" value="TRIOSEPHOSPHATE ISOMERASE"/>
    <property type="match status" value="1"/>
</dbReference>
<dbReference type="Pfam" id="PF00121">
    <property type="entry name" value="TIM"/>
    <property type="match status" value="1"/>
</dbReference>
<dbReference type="SUPFAM" id="SSF51351">
    <property type="entry name" value="Triosephosphate isomerase (TIM)"/>
    <property type="match status" value="1"/>
</dbReference>
<dbReference type="PROSITE" id="PS00171">
    <property type="entry name" value="TIM_1"/>
    <property type="match status" value="1"/>
</dbReference>
<dbReference type="PROSITE" id="PS51440">
    <property type="entry name" value="TIM_2"/>
    <property type="match status" value="1"/>
</dbReference>
<gene>
    <name evidence="1" type="primary">tpiA</name>
    <name type="ordered locus">bll4807</name>
</gene>
<comment type="function">
    <text evidence="1">Involved in the gluconeogenesis. Catalyzes stereospecifically the conversion of dihydroxyacetone phosphate (DHAP) to D-glyceraldehyde-3-phosphate (G3P).</text>
</comment>
<comment type="catalytic activity">
    <reaction evidence="1">
        <text>D-glyceraldehyde 3-phosphate = dihydroxyacetone phosphate</text>
        <dbReference type="Rhea" id="RHEA:18585"/>
        <dbReference type="ChEBI" id="CHEBI:57642"/>
        <dbReference type="ChEBI" id="CHEBI:59776"/>
        <dbReference type="EC" id="5.3.1.1"/>
    </reaction>
</comment>
<comment type="pathway">
    <text evidence="1">Carbohydrate biosynthesis; gluconeogenesis.</text>
</comment>
<comment type="pathway">
    <text evidence="1">Carbohydrate degradation; glycolysis; D-glyceraldehyde 3-phosphate from glycerone phosphate: step 1/1.</text>
</comment>
<comment type="subunit">
    <text evidence="1">Homodimer.</text>
</comment>
<comment type="subcellular location">
    <subcellularLocation>
        <location evidence="1">Cytoplasm</location>
    </subcellularLocation>
</comment>
<comment type="similarity">
    <text evidence="1">Belongs to the triosephosphate isomerase family.</text>
</comment>
<sequence length="251" mass="25769">MTDAIRPLIAGNWKMNGLKASAAEFDAMLNGAADVATKADLLVCPPATLIAAFADKARGKKVAVGAQDCHPKASGAHTGDIAAEMLANAGATAIIVGHSERRADHGEGDALVRQKAEAAWRAGVTAIVCIGETQAQRDAGQTLDILRGQLDGSLPDGSTAANLVVAYEPVWAIGTGLTPTVQDVEQIHGFIREFLTSRFSVDGAKMRILYGGSVKPSNAAELMAVKNVNGALVGGASLKAADFLAIAKGCP</sequence>
<name>TPIS_BRADU</name>
<protein>
    <recommendedName>
        <fullName evidence="1">Triosephosphate isomerase</fullName>
        <shortName evidence="1">TIM</shortName>
        <shortName evidence="1">TPI</shortName>
        <ecNumber evidence="1">5.3.1.1</ecNumber>
    </recommendedName>
    <alternativeName>
        <fullName evidence="1">Triose-phosphate isomerase</fullName>
    </alternativeName>
</protein>
<reference key="1">
    <citation type="journal article" date="2002" name="DNA Res.">
        <title>Complete genomic sequence of nitrogen-fixing symbiotic bacterium Bradyrhizobium japonicum USDA110.</title>
        <authorList>
            <person name="Kaneko T."/>
            <person name="Nakamura Y."/>
            <person name="Sato S."/>
            <person name="Minamisawa K."/>
            <person name="Uchiumi T."/>
            <person name="Sasamoto S."/>
            <person name="Watanabe A."/>
            <person name="Idesawa K."/>
            <person name="Iriguchi M."/>
            <person name="Kawashima K."/>
            <person name="Kohara M."/>
            <person name="Matsumoto M."/>
            <person name="Shimpo S."/>
            <person name="Tsuruoka H."/>
            <person name="Wada T."/>
            <person name="Yamada M."/>
            <person name="Tabata S."/>
        </authorList>
    </citation>
    <scope>NUCLEOTIDE SEQUENCE [LARGE SCALE GENOMIC DNA]</scope>
    <source>
        <strain>JCM 10833 / BCRC 13528 / IAM 13628 / NBRC 14792 / USDA 110</strain>
    </source>
</reference>
<proteinExistence type="inferred from homology"/>
<feature type="chain" id="PRO_0000090187" description="Triosephosphate isomerase">
    <location>
        <begin position="1"/>
        <end position="251"/>
    </location>
</feature>
<feature type="active site" description="Electrophile" evidence="1">
    <location>
        <position position="98"/>
    </location>
</feature>
<feature type="active site" description="Proton acceptor" evidence="1">
    <location>
        <position position="168"/>
    </location>
</feature>
<feature type="binding site" evidence="1">
    <location>
        <begin position="12"/>
        <end position="14"/>
    </location>
    <ligand>
        <name>substrate</name>
    </ligand>
</feature>
<feature type="binding site" evidence="1">
    <location>
        <position position="174"/>
    </location>
    <ligand>
        <name>substrate</name>
    </ligand>
</feature>
<feature type="binding site" evidence="1">
    <location>
        <position position="213"/>
    </location>
    <ligand>
        <name>substrate</name>
    </ligand>
</feature>
<feature type="binding site" evidence="1">
    <location>
        <begin position="234"/>
        <end position="235"/>
    </location>
    <ligand>
        <name>substrate</name>
    </ligand>
</feature>
<evidence type="ECO:0000255" key="1">
    <source>
        <dbReference type="HAMAP-Rule" id="MF_00147"/>
    </source>
</evidence>
<accession>Q89KU3</accession>
<organism>
    <name type="scientific">Bradyrhizobium diazoefficiens (strain JCM 10833 / BCRC 13528 / IAM 13628 / NBRC 14792 / USDA 110)</name>
    <dbReference type="NCBI Taxonomy" id="224911"/>
    <lineage>
        <taxon>Bacteria</taxon>
        <taxon>Pseudomonadati</taxon>
        <taxon>Pseudomonadota</taxon>
        <taxon>Alphaproteobacteria</taxon>
        <taxon>Hyphomicrobiales</taxon>
        <taxon>Nitrobacteraceae</taxon>
        <taxon>Bradyrhizobium</taxon>
    </lineage>
</organism>